<name>HIS7_CORGB</name>
<gene>
    <name evidence="1" type="primary">hisB</name>
    <name type="ordered locus">cgR_1984</name>
</gene>
<sequence>MTVAPRIGTATRTTSESDITVEINLDGTGKVDIDTGLPFFDHMLTAFGVHGSFDLKVHAKGDIEIDAHHTVEDTAIVLGQALLDAIGDKKGIRRFASCQLPMDEALVESVVDISGRPYFVISGEPDHMITSVIGGHYATVINEHFFETLALNSRITLHVICHYGRDPHHITEAEYKAVARALRGAVEMDPRQTGIPSTKGAL</sequence>
<comment type="catalytic activity">
    <reaction evidence="1">
        <text>D-erythro-1-(imidazol-4-yl)glycerol 3-phosphate = 3-(imidazol-4-yl)-2-oxopropyl phosphate + H2O</text>
        <dbReference type="Rhea" id="RHEA:11040"/>
        <dbReference type="ChEBI" id="CHEBI:15377"/>
        <dbReference type="ChEBI" id="CHEBI:57766"/>
        <dbReference type="ChEBI" id="CHEBI:58278"/>
        <dbReference type="EC" id="4.2.1.19"/>
    </reaction>
</comment>
<comment type="pathway">
    <text evidence="1">Amino-acid biosynthesis; L-histidine biosynthesis; L-histidine from 5-phospho-alpha-D-ribose 1-diphosphate: step 6/9.</text>
</comment>
<comment type="subcellular location">
    <subcellularLocation>
        <location evidence="1">Cytoplasm</location>
    </subcellularLocation>
</comment>
<comment type="similarity">
    <text evidence="1">Belongs to the imidazoleglycerol-phosphate dehydratase family.</text>
</comment>
<reference key="1">
    <citation type="journal article" date="2007" name="Microbiology">
        <title>Comparative analysis of the Corynebacterium glutamicum group and complete genome sequence of strain R.</title>
        <authorList>
            <person name="Yukawa H."/>
            <person name="Omumasaba C.A."/>
            <person name="Nonaka H."/>
            <person name="Kos P."/>
            <person name="Okai N."/>
            <person name="Suzuki N."/>
            <person name="Suda M."/>
            <person name="Tsuge Y."/>
            <person name="Watanabe J."/>
            <person name="Ikeda Y."/>
            <person name="Vertes A.A."/>
            <person name="Inui M."/>
        </authorList>
    </citation>
    <scope>NUCLEOTIDE SEQUENCE [LARGE SCALE GENOMIC DNA]</scope>
    <source>
        <strain>R</strain>
    </source>
</reference>
<accession>A4QFG5</accession>
<proteinExistence type="inferred from homology"/>
<evidence type="ECO:0000255" key="1">
    <source>
        <dbReference type="HAMAP-Rule" id="MF_00076"/>
    </source>
</evidence>
<organism>
    <name type="scientific">Corynebacterium glutamicum (strain R)</name>
    <dbReference type="NCBI Taxonomy" id="340322"/>
    <lineage>
        <taxon>Bacteria</taxon>
        <taxon>Bacillati</taxon>
        <taxon>Actinomycetota</taxon>
        <taxon>Actinomycetes</taxon>
        <taxon>Mycobacteriales</taxon>
        <taxon>Corynebacteriaceae</taxon>
        <taxon>Corynebacterium</taxon>
    </lineage>
</organism>
<dbReference type="EC" id="4.2.1.19" evidence="1"/>
<dbReference type="EMBL" id="AP009044">
    <property type="protein sequence ID" value="BAF54981.1"/>
    <property type="molecule type" value="Genomic_DNA"/>
</dbReference>
<dbReference type="RefSeq" id="WP_003861983.1">
    <property type="nucleotide sequence ID" value="NC_009342.1"/>
</dbReference>
<dbReference type="SMR" id="A4QFG5"/>
<dbReference type="GeneID" id="1020051"/>
<dbReference type="KEGG" id="cgt:cgR_1984"/>
<dbReference type="HOGENOM" id="CLU_044308_2_0_11"/>
<dbReference type="PhylomeDB" id="A4QFG5"/>
<dbReference type="UniPathway" id="UPA00031">
    <property type="reaction ID" value="UER00011"/>
</dbReference>
<dbReference type="Proteomes" id="UP000006698">
    <property type="component" value="Chromosome"/>
</dbReference>
<dbReference type="GO" id="GO:0005737">
    <property type="term" value="C:cytoplasm"/>
    <property type="evidence" value="ECO:0007669"/>
    <property type="project" value="UniProtKB-SubCell"/>
</dbReference>
<dbReference type="GO" id="GO:0004424">
    <property type="term" value="F:imidazoleglycerol-phosphate dehydratase activity"/>
    <property type="evidence" value="ECO:0007669"/>
    <property type="project" value="UniProtKB-UniRule"/>
</dbReference>
<dbReference type="GO" id="GO:0000105">
    <property type="term" value="P:L-histidine biosynthetic process"/>
    <property type="evidence" value="ECO:0007669"/>
    <property type="project" value="UniProtKB-UniRule"/>
</dbReference>
<dbReference type="CDD" id="cd07914">
    <property type="entry name" value="IGPD"/>
    <property type="match status" value="1"/>
</dbReference>
<dbReference type="FunFam" id="3.30.230.40:FF:000001">
    <property type="entry name" value="Imidazoleglycerol-phosphate dehydratase HisB"/>
    <property type="match status" value="1"/>
</dbReference>
<dbReference type="FunFam" id="3.30.230.40:FF:000003">
    <property type="entry name" value="Imidazoleglycerol-phosphate dehydratase HisB"/>
    <property type="match status" value="1"/>
</dbReference>
<dbReference type="Gene3D" id="3.30.230.40">
    <property type="entry name" value="Imidazole glycerol phosphate dehydratase, domain 1"/>
    <property type="match status" value="2"/>
</dbReference>
<dbReference type="HAMAP" id="MF_00076">
    <property type="entry name" value="HisB"/>
    <property type="match status" value="1"/>
</dbReference>
<dbReference type="InterPro" id="IPR038494">
    <property type="entry name" value="IGPD_sf"/>
</dbReference>
<dbReference type="InterPro" id="IPR000807">
    <property type="entry name" value="ImidazoleglycerolP_deHydtase"/>
</dbReference>
<dbReference type="InterPro" id="IPR020565">
    <property type="entry name" value="ImidazoleglycerP_deHydtase_CS"/>
</dbReference>
<dbReference type="InterPro" id="IPR020568">
    <property type="entry name" value="Ribosomal_Su5_D2-typ_SF"/>
</dbReference>
<dbReference type="NCBIfam" id="NF002110">
    <property type="entry name" value="PRK00951.1-6"/>
    <property type="match status" value="1"/>
</dbReference>
<dbReference type="NCBIfam" id="NF002111">
    <property type="entry name" value="PRK00951.2-1"/>
    <property type="match status" value="1"/>
</dbReference>
<dbReference type="NCBIfam" id="NF002114">
    <property type="entry name" value="PRK00951.2-4"/>
    <property type="match status" value="1"/>
</dbReference>
<dbReference type="PANTHER" id="PTHR23133:SF2">
    <property type="entry name" value="IMIDAZOLEGLYCEROL-PHOSPHATE DEHYDRATASE"/>
    <property type="match status" value="1"/>
</dbReference>
<dbReference type="PANTHER" id="PTHR23133">
    <property type="entry name" value="IMIDAZOLEGLYCEROL-PHOSPHATE DEHYDRATASE HIS7"/>
    <property type="match status" value="1"/>
</dbReference>
<dbReference type="Pfam" id="PF00475">
    <property type="entry name" value="IGPD"/>
    <property type="match status" value="1"/>
</dbReference>
<dbReference type="SUPFAM" id="SSF54211">
    <property type="entry name" value="Ribosomal protein S5 domain 2-like"/>
    <property type="match status" value="2"/>
</dbReference>
<dbReference type="PROSITE" id="PS00954">
    <property type="entry name" value="IGP_DEHYDRATASE_1"/>
    <property type="match status" value="1"/>
</dbReference>
<dbReference type="PROSITE" id="PS00955">
    <property type="entry name" value="IGP_DEHYDRATASE_2"/>
    <property type="match status" value="1"/>
</dbReference>
<protein>
    <recommendedName>
        <fullName evidence="1">Imidazoleglycerol-phosphate dehydratase</fullName>
        <shortName evidence="1">IGPD</shortName>
        <ecNumber evidence="1">4.2.1.19</ecNumber>
    </recommendedName>
</protein>
<keyword id="KW-0028">Amino-acid biosynthesis</keyword>
<keyword id="KW-0963">Cytoplasm</keyword>
<keyword id="KW-0368">Histidine biosynthesis</keyword>
<keyword id="KW-0456">Lyase</keyword>
<feature type="chain" id="PRO_1000010273" description="Imidazoleglycerol-phosphate dehydratase">
    <location>
        <begin position="1"/>
        <end position="202"/>
    </location>
</feature>